<protein>
    <recommendedName>
        <fullName evidence="1">Pantothenate synthetase</fullName>
        <shortName evidence="1">PS</shortName>
        <ecNumber evidence="1">6.3.2.1</ecNumber>
    </recommendedName>
    <alternativeName>
        <fullName evidence="1">Pantoate--beta-alanine ligase</fullName>
    </alternativeName>
    <alternativeName>
        <fullName evidence="1">Pantoate-activating enzyme</fullName>
    </alternativeName>
</protein>
<keyword id="KW-0067">ATP-binding</keyword>
<keyword id="KW-0963">Cytoplasm</keyword>
<keyword id="KW-0436">Ligase</keyword>
<keyword id="KW-0547">Nucleotide-binding</keyword>
<keyword id="KW-0566">Pantothenate biosynthesis</keyword>
<sequence>MIQTLTDLSALRALVNGWKREGLRVALVPTMGNLHAGHYSLVMLARQYADRVVSSVFVNPTQFGPNEDFARYPRTPEADLRGLEDAGCDALWLPDVDTMYPLGTALATPIHAPGVSDVLEGECRPGHFDGVCTVVARLFNQVQPDVAAFGKKDYQQLAVIRQMVADLAFPIEILGGSIVREADGLAMSSRNQYLSAEDRPISATIRKVLLQMRDSYAAGTPRAQVEDAASQALEQAGFRVDYAVVRLPDLSEPGDSYTGARVALIAARLGNTRLIDNLEF</sequence>
<reference key="1">
    <citation type="journal article" date="2005" name="J. Bacteriol.">
        <title>Insights into genome plasticity and pathogenicity of the plant pathogenic Bacterium Xanthomonas campestris pv. vesicatoria revealed by the complete genome sequence.</title>
        <authorList>
            <person name="Thieme F."/>
            <person name="Koebnik R."/>
            <person name="Bekel T."/>
            <person name="Berger C."/>
            <person name="Boch J."/>
            <person name="Buettner D."/>
            <person name="Caldana C."/>
            <person name="Gaigalat L."/>
            <person name="Goesmann A."/>
            <person name="Kay S."/>
            <person name="Kirchner O."/>
            <person name="Lanz C."/>
            <person name="Linke B."/>
            <person name="McHardy A.C."/>
            <person name="Meyer F."/>
            <person name="Mittenhuber G."/>
            <person name="Nies D.H."/>
            <person name="Niesbach-Kloesgen U."/>
            <person name="Patschkowski T."/>
            <person name="Rueckert C."/>
            <person name="Rupp O."/>
            <person name="Schneiker S."/>
            <person name="Schuster S.C."/>
            <person name="Vorhoelter F.J."/>
            <person name="Weber E."/>
            <person name="Puehler A."/>
            <person name="Bonas U."/>
            <person name="Bartels D."/>
            <person name="Kaiser O."/>
        </authorList>
    </citation>
    <scope>NUCLEOTIDE SEQUENCE [LARGE SCALE GENOMIC DNA]</scope>
    <source>
        <strain>85-10</strain>
    </source>
</reference>
<name>PANC_XANE5</name>
<organism>
    <name type="scientific">Xanthomonas euvesicatoria pv. vesicatoria (strain 85-10)</name>
    <name type="common">Xanthomonas campestris pv. vesicatoria</name>
    <dbReference type="NCBI Taxonomy" id="316273"/>
    <lineage>
        <taxon>Bacteria</taxon>
        <taxon>Pseudomonadati</taxon>
        <taxon>Pseudomonadota</taxon>
        <taxon>Gammaproteobacteria</taxon>
        <taxon>Lysobacterales</taxon>
        <taxon>Lysobacteraceae</taxon>
        <taxon>Xanthomonas</taxon>
    </lineage>
</organism>
<accession>Q3BUL5</accession>
<dbReference type="EC" id="6.3.2.1" evidence="1"/>
<dbReference type="EMBL" id="AM039952">
    <property type="protein sequence ID" value="CAJ23494.1"/>
    <property type="molecule type" value="Genomic_DNA"/>
</dbReference>
<dbReference type="RefSeq" id="WP_011347142.1">
    <property type="nucleotide sequence ID" value="NZ_CP017190.1"/>
</dbReference>
<dbReference type="SMR" id="Q3BUL5"/>
<dbReference type="STRING" id="456327.BJD11_13430"/>
<dbReference type="GeneID" id="97510161"/>
<dbReference type="KEGG" id="xcv:XCV1817"/>
<dbReference type="eggNOG" id="COG0414">
    <property type="taxonomic scope" value="Bacteria"/>
</dbReference>
<dbReference type="HOGENOM" id="CLU_047148_0_0_6"/>
<dbReference type="UniPathway" id="UPA00028">
    <property type="reaction ID" value="UER00005"/>
</dbReference>
<dbReference type="Proteomes" id="UP000007069">
    <property type="component" value="Chromosome"/>
</dbReference>
<dbReference type="GO" id="GO:0005829">
    <property type="term" value="C:cytosol"/>
    <property type="evidence" value="ECO:0007669"/>
    <property type="project" value="TreeGrafter"/>
</dbReference>
<dbReference type="GO" id="GO:0005524">
    <property type="term" value="F:ATP binding"/>
    <property type="evidence" value="ECO:0007669"/>
    <property type="project" value="UniProtKB-KW"/>
</dbReference>
<dbReference type="GO" id="GO:0004592">
    <property type="term" value="F:pantoate-beta-alanine ligase activity"/>
    <property type="evidence" value="ECO:0007669"/>
    <property type="project" value="UniProtKB-UniRule"/>
</dbReference>
<dbReference type="GO" id="GO:0015940">
    <property type="term" value="P:pantothenate biosynthetic process"/>
    <property type="evidence" value="ECO:0007669"/>
    <property type="project" value="UniProtKB-UniRule"/>
</dbReference>
<dbReference type="CDD" id="cd00560">
    <property type="entry name" value="PanC"/>
    <property type="match status" value="1"/>
</dbReference>
<dbReference type="FunFam" id="3.40.50.620:FF:000114">
    <property type="entry name" value="Pantothenate synthetase"/>
    <property type="match status" value="1"/>
</dbReference>
<dbReference type="Gene3D" id="3.40.50.620">
    <property type="entry name" value="HUPs"/>
    <property type="match status" value="1"/>
</dbReference>
<dbReference type="Gene3D" id="3.30.1300.10">
    <property type="entry name" value="Pantoate-beta-alanine ligase, C-terminal domain"/>
    <property type="match status" value="1"/>
</dbReference>
<dbReference type="HAMAP" id="MF_00158">
    <property type="entry name" value="PanC"/>
    <property type="match status" value="1"/>
</dbReference>
<dbReference type="InterPro" id="IPR003721">
    <property type="entry name" value="Pantoate_ligase"/>
</dbReference>
<dbReference type="InterPro" id="IPR042176">
    <property type="entry name" value="Pantoate_ligase_C"/>
</dbReference>
<dbReference type="InterPro" id="IPR014729">
    <property type="entry name" value="Rossmann-like_a/b/a_fold"/>
</dbReference>
<dbReference type="NCBIfam" id="TIGR00018">
    <property type="entry name" value="panC"/>
    <property type="match status" value="1"/>
</dbReference>
<dbReference type="PANTHER" id="PTHR21299">
    <property type="entry name" value="CYTIDYLATE KINASE/PANTOATE-BETA-ALANINE LIGASE"/>
    <property type="match status" value="1"/>
</dbReference>
<dbReference type="PANTHER" id="PTHR21299:SF1">
    <property type="entry name" value="PANTOATE--BETA-ALANINE LIGASE"/>
    <property type="match status" value="1"/>
</dbReference>
<dbReference type="Pfam" id="PF02569">
    <property type="entry name" value="Pantoate_ligase"/>
    <property type="match status" value="1"/>
</dbReference>
<dbReference type="SUPFAM" id="SSF52374">
    <property type="entry name" value="Nucleotidylyl transferase"/>
    <property type="match status" value="1"/>
</dbReference>
<feature type="chain" id="PRO_0000305577" description="Pantothenate synthetase">
    <location>
        <begin position="1"/>
        <end position="280"/>
    </location>
</feature>
<feature type="active site" description="Proton donor" evidence="1">
    <location>
        <position position="38"/>
    </location>
</feature>
<feature type="binding site" evidence="1">
    <location>
        <begin position="31"/>
        <end position="38"/>
    </location>
    <ligand>
        <name>ATP</name>
        <dbReference type="ChEBI" id="CHEBI:30616"/>
    </ligand>
</feature>
<feature type="binding site" evidence="1">
    <location>
        <position position="62"/>
    </location>
    <ligand>
        <name>(R)-pantoate</name>
        <dbReference type="ChEBI" id="CHEBI:15980"/>
    </ligand>
</feature>
<feature type="binding site" evidence="1">
    <location>
        <position position="62"/>
    </location>
    <ligand>
        <name>beta-alanine</name>
        <dbReference type="ChEBI" id="CHEBI:57966"/>
    </ligand>
</feature>
<feature type="binding site" evidence="1">
    <location>
        <begin position="150"/>
        <end position="153"/>
    </location>
    <ligand>
        <name>ATP</name>
        <dbReference type="ChEBI" id="CHEBI:30616"/>
    </ligand>
</feature>
<feature type="binding site" evidence="1">
    <location>
        <position position="156"/>
    </location>
    <ligand>
        <name>(R)-pantoate</name>
        <dbReference type="ChEBI" id="CHEBI:15980"/>
    </ligand>
</feature>
<feature type="binding site" evidence="1">
    <location>
        <position position="179"/>
    </location>
    <ligand>
        <name>ATP</name>
        <dbReference type="ChEBI" id="CHEBI:30616"/>
    </ligand>
</feature>
<feature type="binding site" evidence="1">
    <location>
        <begin position="187"/>
        <end position="190"/>
    </location>
    <ligand>
        <name>ATP</name>
        <dbReference type="ChEBI" id="CHEBI:30616"/>
    </ligand>
</feature>
<comment type="function">
    <text evidence="1">Catalyzes the condensation of pantoate with beta-alanine in an ATP-dependent reaction via a pantoyl-adenylate intermediate.</text>
</comment>
<comment type="catalytic activity">
    <reaction evidence="1">
        <text>(R)-pantoate + beta-alanine + ATP = (R)-pantothenate + AMP + diphosphate + H(+)</text>
        <dbReference type="Rhea" id="RHEA:10912"/>
        <dbReference type="ChEBI" id="CHEBI:15378"/>
        <dbReference type="ChEBI" id="CHEBI:15980"/>
        <dbReference type="ChEBI" id="CHEBI:29032"/>
        <dbReference type="ChEBI" id="CHEBI:30616"/>
        <dbReference type="ChEBI" id="CHEBI:33019"/>
        <dbReference type="ChEBI" id="CHEBI:57966"/>
        <dbReference type="ChEBI" id="CHEBI:456215"/>
        <dbReference type="EC" id="6.3.2.1"/>
    </reaction>
</comment>
<comment type="pathway">
    <text evidence="1">Cofactor biosynthesis; (R)-pantothenate biosynthesis; (R)-pantothenate from (R)-pantoate and beta-alanine: step 1/1.</text>
</comment>
<comment type="subunit">
    <text evidence="1">Homodimer.</text>
</comment>
<comment type="subcellular location">
    <subcellularLocation>
        <location evidence="1">Cytoplasm</location>
    </subcellularLocation>
</comment>
<comment type="miscellaneous">
    <text evidence="1">The reaction proceeds by a bi uni uni bi ping pong mechanism.</text>
</comment>
<comment type="similarity">
    <text evidence="1">Belongs to the pantothenate synthetase family.</text>
</comment>
<evidence type="ECO:0000255" key="1">
    <source>
        <dbReference type="HAMAP-Rule" id="MF_00158"/>
    </source>
</evidence>
<gene>
    <name evidence="1" type="primary">panC</name>
    <name type="ordered locus">XCV1817</name>
</gene>
<proteinExistence type="inferred from homology"/>